<feature type="chain" id="PRO_0000135055" description="Probable rubredoxin HupI">
    <location>
        <begin position="1"/>
        <end position="69"/>
    </location>
</feature>
<feature type="domain" description="Rubredoxin-like" evidence="2">
    <location>
        <begin position="16"/>
        <end position="67"/>
    </location>
</feature>
<feature type="binding site" evidence="2">
    <location>
        <position position="21"/>
    </location>
    <ligand>
        <name>Fe cation</name>
        <dbReference type="ChEBI" id="CHEBI:24875"/>
    </ligand>
</feature>
<feature type="binding site" evidence="2">
    <location>
        <position position="24"/>
    </location>
    <ligand>
        <name>Fe cation</name>
        <dbReference type="ChEBI" id="CHEBI:24875"/>
    </ligand>
</feature>
<feature type="binding site" evidence="2">
    <location>
        <position position="54"/>
    </location>
    <ligand>
        <name>Fe cation</name>
        <dbReference type="ChEBI" id="CHEBI:24875"/>
    </ligand>
</feature>
<feature type="binding site" evidence="2">
    <location>
        <position position="57"/>
    </location>
    <ligand>
        <name>Fe cation</name>
        <dbReference type="ChEBI" id="CHEBI:24875"/>
    </ligand>
</feature>
<accession>P48344</accession>
<name>RUBL_BRADU</name>
<evidence type="ECO:0000250" key="1"/>
<evidence type="ECO:0000255" key="2">
    <source>
        <dbReference type="PROSITE-ProRule" id="PRU00241"/>
    </source>
</evidence>
<evidence type="ECO:0000305" key="3"/>
<keyword id="KW-0249">Electron transport</keyword>
<keyword id="KW-0408">Iron</keyword>
<keyword id="KW-0479">Metal-binding</keyword>
<keyword id="KW-1185">Reference proteome</keyword>
<keyword id="KW-0813">Transport</keyword>
<proteinExistence type="inferred from homology"/>
<gene>
    <name type="primary">hupI</name>
    <name type="ordered locus">bsl6935</name>
</gene>
<reference key="1">
    <citation type="journal article" date="1994" name="Gene">
        <title>Organization of the hydrogenase gene cluster from Bradyrhizobium japonicum: sequences and analysis of five more hydrogenase-related genes.</title>
        <authorList>
            <person name="Fu C."/>
            <person name="Maier R.J."/>
        </authorList>
    </citation>
    <scope>NUCLEOTIDE SEQUENCE [GENOMIC DNA]</scope>
    <source>
        <strain>JCM 10833 / BCRC 13528 / IAM 13628 / NBRC 14792 / USDA 110</strain>
    </source>
</reference>
<reference key="2">
    <citation type="journal article" date="2002" name="DNA Res.">
        <title>Complete genomic sequence of nitrogen-fixing symbiotic bacterium Bradyrhizobium japonicum USDA110.</title>
        <authorList>
            <person name="Kaneko T."/>
            <person name="Nakamura Y."/>
            <person name="Sato S."/>
            <person name="Minamisawa K."/>
            <person name="Uchiumi T."/>
            <person name="Sasamoto S."/>
            <person name="Watanabe A."/>
            <person name="Idesawa K."/>
            <person name="Iriguchi M."/>
            <person name="Kawashima K."/>
            <person name="Kohara M."/>
            <person name="Matsumoto M."/>
            <person name="Shimpo S."/>
            <person name="Tsuruoka H."/>
            <person name="Wada T."/>
            <person name="Yamada M."/>
            <person name="Tabata S."/>
        </authorList>
    </citation>
    <scope>NUCLEOTIDE SEQUENCE [LARGE SCALE GENOMIC DNA]</scope>
    <source>
        <strain>JCM 10833 / BCRC 13528 / IAM 13628 / NBRC 14792 / USDA 110</strain>
    </source>
</reference>
<protein>
    <recommendedName>
        <fullName>Probable rubredoxin HupI</fullName>
    </recommendedName>
</protein>
<sequence>MSAFENFGVRQDVTDVTRLECGICWTVYDPADGDDVAQIAPGTPFAALPEEWHCPNCDAPKSKFMAIES</sequence>
<organism>
    <name type="scientific">Bradyrhizobium diazoefficiens (strain JCM 10833 / BCRC 13528 / IAM 13628 / NBRC 14792 / USDA 110)</name>
    <dbReference type="NCBI Taxonomy" id="224911"/>
    <lineage>
        <taxon>Bacteria</taxon>
        <taxon>Pseudomonadati</taxon>
        <taxon>Pseudomonadota</taxon>
        <taxon>Alphaproteobacteria</taxon>
        <taxon>Hyphomicrobiales</taxon>
        <taxon>Nitrobacteraceae</taxon>
        <taxon>Bradyrhizobium</taxon>
    </lineage>
</organism>
<dbReference type="EMBL" id="L25760">
    <property type="protein sequence ID" value="AAA50824.1"/>
    <property type="molecule type" value="Genomic_DNA"/>
</dbReference>
<dbReference type="EMBL" id="BA000040">
    <property type="protein sequence ID" value="BAC52200.1"/>
    <property type="molecule type" value="Genomic_DNA"/>
</dbReference>
<dbReference type="RefSeq" id="NP_773575.1">
    <property type="nucleotide sequence ID" value="NC_004463.1"/>
</dbReference>
<dbReference type="RefSeq" id="WP_011089673.1">
    <property type="nucleotide sequence ID" value="NC_004463.1"/>
</dbReference>
<dbReference type="SMR" id="P48344"/>
<dbReference type="STRING" id="224911.AAV28_32265"/>
<dbReference type="EnsemblBacteria" id="BAC52200">
    <property type="protein sequence ID" value="BAC52200"/>
    <property type="gene ID" value="BAC52200"/>
</dbReference>
<dbReference type="GeneID" id="46493901"/>
<dbReference type="KEGG" id="bja:bsl6935"/>
<dbReference type="PATRIC" id="fig|224911.44.peg.6969"/>
<dbReference type="eggNOG" id="COG1773">
    <property type="taxonomic scope" value="Bacteria"/>
</dbReference>
<dbReference type="HOGENOM" id="CLU_128747_2_1_5"/>
<dbReference type="InParanoid" id="P48344"/>
<dbReference type="OrthoDB" id="9808980at2"/>
<dbReference type="PhylomeDB" id="P48344"/>
<dbReference type="Proteomes" id="UP000002526">
    <property type="component" value="Chromosome"/>
</dbReference>
<dbReference type="GO" id="GO:0005506">
    <property type="term" value="F:iron ion binding"/>
    <property type="evidence" value="ECO:0007669"/>
    <property type="project" value="InterPro"/>
</dbReference>
<dbReference type="CDD" id="cd00730">
    <property type="entry name" value="rubredoxin"/>
    <property type="match status" value="1"/>
</dbReference>
<dbReference type="Gene3D" id="2.20.28.10">
    <property type="match status" value="1"/>
</dbReference>
<dbReference type="InterPro" id="IPR024934">
    <property type="entry name" value="Rubredoxin-like_dom"/>
</dbReference>
<dbReference type="InterPro" id="IPR024935">
    <property type="entry name" value="Rubredoxin_dom"/>
</dbReference>
<dbReference type="InterPro" id="IPR050526">
    <property type="entry name" value="Rubredoxin_ET"/>
</dbReference>
<dbReference type="InterPro" id="IPR018527">
    <property type="entry name" value="Rubredoxin_Fe_BS"/>
</dbReference>
<dbReference type="PANTHER" id="PTHR47627">
    <property type="entry name" value="RUBREDOXIN"/>
    <property type="match status" value="1"/>
</dbReference>
<dbReference type="PANTHER" id="PTHR47627:SF1">
    <property type="entry name" value="RUBREDOXIN-1-RELATED"/>
    <property type="match status" value="1"/>
</dbReference>
<dbReference type="Pfam" id="PF00301">
    <property type="entry name" value="Rubredoxin"/>
    <property type="match status" value="1"/>
</dbReference>
<dbReference type="PRINTS" id="PR00163">
    <property type="entry name" value="RUBREDOXIN"/>
</dbReference>
<dbReference type="SUPFAM" id="SSF57802">
    <property type="entry name" value="Rubredoxin-like"/>
    <property type="match status" value="1"/>
</dbReference>
<dbReference type="PROSITE" id="PS00202">
    <property type="entry name" value="RUBREDOXIN"/>
    <property type="match status" value="1"/>
</dbReference>
<dbReference type="PROSITE" id="PS50903">
    <property type="entry name" value="RUBREDOXIN_LIKE"/>
    <property type="match status" value="1"/>
</dbReference>
<comment type="function">
    <text>Could be an electron transport intermediate in hydrogen oxidation.</text>
</comment>
<comment type="cofactor">
    <cofactor evidence="1">
        <name>Fe(3+)</name>
        <dbReference type="ChEBI" id="CHEBI:29034"/>
    </cofactor>
    <text evidence="1">Binds 1 Fe(3+) ion per subunit.</text>
</comment>
<comment type="similarity">
    <text evidence="3">Belongs to the rubredoxin family.</text>
</comment>